<protein>
    <recommendedName>
        <fullName evidence="1">Anhydro-N-acetylmuramic acid kinase</fullName>
        <ecNumber evidence="1">2.7.1.170</ecNumber>
    </recommendedName>
    <alternativeName>
        <fullName evidence="1">AnhMurNAc kinase</fullName>
    </alternativeName>
</protein>
<proteinExistence type="inferred from homology"/>
<dbReference type="EC" id="2.7.1.170" evidence="1"/>
<dbReference type="EMBL" id="AP009240">
    <property type="protein sequence ID" value="BAG77287.1"/>
    <property type="molecule type" value="Genomic_DNA"/>
</dbReference>
<dbReference type="RefSeq" id="WP_000835094.1">
    <property type="nucleotide sequence ID" value="NC_011415.1"/>
</dbReference>
<dbReference type="SMR" id="B6IB79"/>
<dbReference type="GeneID" id="75204485"/>
<dbReference type="KEGG" id="ecy:ECSE_1763"/>
<dbReference type="HOGENOM" id="CLU_038782_0_0_6"/>
<dbReference type="UniPathway" id="UPA00343"/>
<dbReference type="UniPathway" id="UPA00544"/>
<dbReference type="Proteomes" id="UP000008199">
    <property type="component" value="Chromosome"/>
</dbReference>
<dbReference type="GO" id="GO:0005524">
    <property type="term" value="F:ATP binding"/>
    <property type="evidence" value="ECO:0007669"/>
    <property type="project" value="UniProtKB-UniRule"/>
</dbReference>
<dbReference type="GO" id="GO:0016301">
    <property type="term" value="F:kinase activity"/>
    <property type="evidence" value="ECO:0007669"/>
    <property type="project" value="UniProtKB-KW"/>
</dbReference>
<dbReference type="GO" id="GO:0016773">
    <property type="term" value="F:phosphotransferase activity, alcohol group as acceptor"/>
    <property type="evidence" value="ECO:0007669"/>
    <property type="project" value="UniProtKB-UniRule"/>
</dbReference>
<dbReference type="GO" id="GO:0097175">
    <property type="term" value="P:1,6-anhydro-N-acetyl-beta-muramic acid catabolic process"/>
    <property type="evidence" value="ECO:0007669"/>
    <property type="project" value="UniProtKB-UniRule"/>
</dbReference>
<dbReference type="GO" id="GO:0006040">
    <property type="term" value="P:amino sugar metabolic process"/>
    <property type="evidence" value="ECO:0007669"/>
    <property type="project" value="InterPro"/>
</dbReference>
<dbReference type="GO" id="GO:0009254">
    <property type="term" value="P:peptidoglycan turnover"/>
    <property type="evidence" value="ECO:0007669"/>
    <property type="project" value="UniProtKB-UniRule"/>
</dbReference>
<dbReference type="CDD" id="cd24050">
    <property type="entry name" value="ASKHA_NBD_ANMK"/>
    <property type="match status" value="1"/>
</dbReference>
<dbReference type="FunFam" id="3.30.420.40:FF:000090">
    <property type="entry name" value="Anhydro-N-acetylmuramic acid kinase"/>
    <property type="match status" value="1"/>
</dbReference>
<dbReference type="Gene3D" id="3.30.420.40">
    <property type="match status" value="2"/>
</dbReference>
<dbReference type="HAMAP" id="MF_01270">
    <property type="entry name" value="AnhMurNAc_kinase"/>
    <property type="match status" value="1"/>
</dbReference>
<dbReference type="InterPro" id="IPR005338">
    <property type="entry name" value="Anhydro_N_Ac-Mur_kinase"/>
</dbReference>
<dbReference type="InterPro" id="IPR043129">
    <property type="entry name" value="ATPase_NBD"/>
</dbReference>
<dbReference type="NCBIfam" id="NF007138">
    <property type="entry name" value="PRK09585.1-1"/>
    <property type="match status" value="1"/>
</dbReference>
<dbReference type="NCBIfam" id="NF007139">
    <property type="entry name" value="PRK09585.1-3"/>
    <property type="match status" value="1"/>
</dbReference>
<dbReference type="NCBIfam" id="NF007148">
    <property type="entry name" value="PRK09585.3-2"/>
    <property type="match status" value="1"/>
</dbReference>
<dbReference type="PANTHER" id="PTHR30605">
    <property type="entry name" value="ANHYDRO-N-ACETYLMURAMIC ACID KINASE"/>
    <property type="match status" value="1"/>
</dbReference>
<dbReference type="PANTHER" id="PTHR30605:SF0">
    <property type="entry name" value="ANHYDRO-N-ACETYLMURAMIC ACID KINASE"/>
    <property type="match status" value="1"/>
</dbReference>
<dbReference type="Pfam" id="PF03702">
    <property type="entry name" value="AnmK"/>
    <property type="match status" value="1"/>
</dbReference>
<dbReference type="SUPFAM" id="SSF53067">
    <property type="entry name" value="Actin-like ATPase domain"/>
    <property type="match status" value="1"/>
</dbReference>
<organism>
    <name type="scientific">Escherichia coli (strain SE11)</name>
    <dbReference type="NCBI Taxonomy" id="409438"/>
    <lineage>
        <taxon>Bacteria</taxon>
        <taxon>Pseudomonadati</taxon>
        <taxon>Pseudomonadota</taxon>
        <taxon>Gammaproteobacteria</taxon>
        <taxon>Enterobacterales</taxon>
        <taxon>Enterobacteriaceae</taxon>
        <taxon>Escherichia</taxon>
    </lineage>
</organism>
<accession>B6IB79</accession>
<evidence type="ECO:0000255" key="1">
    <source>
        <dbReference type="HAMAP-Rule" id="MF_01270"/>
    </source>
</evidence>
<name>ANMK_ECOSE</name>
<reference key="1">
    <citation type="journal article" date="2008" name="DNA Res.">
        <title>Complete genome sequence and comparative analysis of the wild-type commensal Escherichia coli strain SE11 isolated from a healthy adult.</title>
        <authorList>
            <person name="Oshima K."/>
            <person name="Toh H."/>
            <person name="Ogura Y."/>
            <person name="Sasamoto H."/>
            <person name="Morita H."/>
            <person name="Park S.-H."/>
            <person name="Ooka T."/>
            <person name="Iyoda S."/>
            <person name="Taylor T.D."/>
            <person name="Hayashi T."/>
            <person name="Itoh K."/>
            <person name="Hattori M."/>
        </authorList>
    </citation>
    <scope>NUCLEOTIDE SEQUENCE [LARGE SCALE GENOMIC DNA]</scope>
    <source>
        <strain>SE11</strain>
    </source>
</reference>
<sequence>MKSGRFIGVMSGTSLDGVDVVLATIDEHRVAQLASLSWPIPVSLKQAVLDICQGQQLTLSQFGQLDTQLGRLFADAVNALLKEQNLQARDIVAIGCHGQTVWHEPTGVAPHTLQIGDNNQIVARTGITVVGDFRRRDIALGGQGAPLVPAFHHALLAHSTERRMVLNIGGIANLSLLIPGQPVGGYDTGPGNMLMDAWIWRQAGKPYDKDAEWARAGKVILPLLQNMLSDPYFSQPAPKSTGREYFNYGWLERHLRHFPGVDPRDVQATLAELTAVTISEQVLLSGGCERLMVCGGGSRNPLLMARLAALLPGTEVTTTDAVGISGDDMEALAFAWLAWRTLAGLPGNLPSVTGASQETVLGAIFPANP</sequence>
<gene>
    <name evidence="1" type="primary">anmK</name>
    <name type="ordered locus">ECSE_1763</name>
</gene>
<keyword id="KW-0067">ATP-binding</keyword>
<keyword id="KW-0119">Carbohydrate metabolism</keyword>
<keyword id="KW-0418">Kinase</keyword>
<keyword id="KW-0547">Nucleotide-binding</keyword>
<keyword id="KW-0808">Transferase</keyword>
<feature type="chain" id="PRO_1000140159" description="Anhydro-N-acetylmuramic acid kinase">
    <location>
        <begin position="1"/>
        <end position="369"/>
    </location>
</feature>
<feature type="binding site" evidence="1">
    <location>
        <begin position="12"/>
        <end position="19"/>
    </location>
    <ligand>
        <name>ATP</name>
        <dbReference type="ChEBI" id="CHEBI:30616"/>
    </ligand>
</feature>
<comment type="function">
    <text evidence="1">Catalyzes the specific phosphorylation of 1,6-anhydro-N-acetylmuramic acid (anhMurNAc) with the simultaneous cleavage of the 1,6-anhydro ring, generating MurNAc-6-P. Is required for the utilization of anhMurNAc either imported from the medium or derived from its own cell wall murein, and thus plays a role in cell wall recycling.</text>
</comment>
<comment type="catalytic activity">
    <reaction evidence="1">
        <text>1,6-anhydro-N-acetyl-beta-muramate + ATP + H2O = N-acetyl-D-muramate 6-phosphate + ADP + H(+)</text>
        <dbReference type="Rhea" id="RHEA:24952"/>
        <dbReference type="ChEBI" id="CHEBI:15377"/>
        <dbReference type="ChEBI" id="CHEBI:15378"/>
        <dbReference type="ChEBI" id="CHEBI:30616"/>
        <dbReference type="ChEBI" id="CHEBI:58690"/>
        <dbReference type="ChEBI" id="CHEBI:58722"/>
        <dbReference type="ChEBI" id="CHEBI:456216"/>
        <dbReference type="EC" id="2.7.1.170"/>
    </reaction>
</comment>
<comment type="pathway">
    <text evidence="1">Amino-sugar metabolism; 1,6-anhydro-N-acetylmuramate degradation.</text>
</comment>
<comment type="pathway">
    <text evidence="1">Cell wall biogenesis; peptidoglycan recycling.</text>
</comment>
<comment type="similarity">
    <text evidence="1">Belongs to the anhydro-N-acetylmuramic acid kinase family.</text>
</comment>